<organism>
    <name type="scientific">Neorickettsia sennetsu (strain ATCC VR-367 / Miyayama)</name>
    <name type="common">Ehrlichia sennetsu</name>
    <dbReference type="NCBI Taxonomy" id="222891"/>
    <lineage>
        <taxon>Bacteria</taxon>
        <taxon>Pseudomonadati</taxon>
        <taxon>Pseudomonadota</taxon>
        <taxon>Alphaproteobacteria</taxon>
        <taxon>Rickettsiales</taxon>
        <taxon>Anaplasmataceae</taxon>
        <taxon>Neorickettsia</taxon>
    </lineage>
</organism>
<accession>Q2GCV4</accession>
<comment type="function">
    <text evidence="1">NDH-1 shuttles electrons from NADH, via FMN and iron-sulfur (Fe-S) centers, to quinones in the respiratory chain. The immediate electron acceptor for the enzyme in this species is believed to be ubiquinone. Couples the redox reaction to proton translocation (for every two electrons transferred, four hydrogen ions are translocated across the cytoplasmic membrane), and thus conserves the redox energy in a proton gradient.</text>
</comment>
<comment type="catalytic activity">
    <reaction evidence="1">
        <text>a quinone + NADH + 5 H(+)(in) = a quinol + NAD(+) + 4 H(+)(out)</text>
        <dbReference type="Rhea" id="RHEA:57888"/>
        <dbReference type="ChEBI" id="CHEBI:15378"/>
        <dbReference type="ChEBI" id="CHEBI:24646"/>
        <dbReference type="ChEBI" id="CHEBI:57540"/>
        <dbReference type="ChEBI" id="CHEBI:57945"/>
        <dbReference type="ChEBI" id="CHEBI:132124"/>
    </reaction>
</comment>
<comment type="cofactor">
    <cofactor evidence="1">
        <name>[4Fe-4S] cluster</name>
        <dbReference type="ChEBI" id="CHEBI:49883"/>
    </cofactor>
    <text evidence="1">Binds 2 [4Fe-4S] clusters per subunit.</text>
</comment>
<comment type="subunit">
    <text evidence="1">NDH-1 is composed of 14 different subunits. Subunits NuoA, H, J, K, L, M, N constitute the membrane sector of the complex.</text>
</comment>
<comment type="subcellular location">
    <subcellularLocation>
        <location evidence="1">Cell inner membrane</location>
        <topology evidence="1">Peripheral membrane protein</topology>
    </subcellularLocation>
</comment>
<comment type="similarity">
    <text evidence="1">Belongs to the complex I 23 kDa subunit family.</text>
</comment>
<keyword id="KW-0004">4Fe-4S</keyword>
<keyword id="KW-0997">Cell inner membrane</keyword>
<keyword id="KW-1003">Cell membrane</keyword>
<keyword id="KW-0408">Iron</keyword>
<keyword id="KW-0411">Iron-sulfur</keyword>
<keyword id="KW-0472">Membrane</keyword>
<keyword id="KW-0479">Metal-binding</keyword>
<keyword id="KW-0520">NAD</keyword>
<keyword id="KW-0874">Quinone</keyword>
<keyword id="KW-0677">Repeat</keyword>
<keyword id="KW-1278">Translocase</keyword>
<keyword id="KW-0830">Ubiquinone</keyword>
<gene>
    <name evidence="1" type="primary">nuoI</name>
    <name type="ordered locus">NSE_0820</name>
</gene>
<feature type="chain" id="PRO_0000250918" description="NADH-quinone oxidoreductase subunit I">
    <location>
        <begin position="1"/>
        <end position="160"/>
    </location>
</feature>
<feature type="domain" description="4Fe-4S ferredoxin-type 1" evidence="1">
    <location>
        <begin position="51"/>
        <end position="80"/>
    </location>
</feature>
<feature type="domain" description="4Fe-4S ferredoxin-type 2" evidence="1">
    <location>
        <begin position="91"/>
        <end position="120"/>
    </location>
</feature>
<feature type="binding site" evidence="1">
    <location>
        <position position="60"/>
    </location>
    <ligand>
        <name>[4Fe-4S] cluster</name>
        <dbReference type="ChEBI" id="CHEBI:49883"/>
        <label>1</label>
    </ligand>
</feature>
<feature type="binding site" evidence="1">
    <location>
        <position position="63"/>
    </location>
    <ligand>
        <name>[4Fe-4S] cluster</name>
        <dbReference type="ChEBI" id="CHEBI:49883"/>
        <label>1</label>
    </ligand>
</feature>
<feature type="binding site" evidence="1">
    <location>
        <position position="66"/>
    </location>
    <ligand>
        <name>[4Fe-4S] cluster</name>
        <dbReference type="ChEBI" id="CHEBI:49883"/>
        <label>1</label>
    </ligand>
</feature>
<feature type="binding site" evidence="1">
    <location>
        <position position="70"/>
    </location>
    <ligand>
        <name>[4Fe-4S] cluster</name>
        <dbReference type="ChEBI" id="CHEBI:49883"/>
        <label>2</label>
    </ligand>
</feature>
<feature type="binding site" evidence="1">
    <location>
        <position position="100"/>
    </location>
    <ligand>
        <name>[4Fe-4S] cluster</name>
        <dbReference type="ChEBI" id="CHEBI:49883"/>
        <label>2</label>
    </ligand>
</feature>
<feature type="binding site" evidence="1">
    <location>
        <position position="103"/>
    </location>
    <ligand>
        <name>[4Fe-4S] cluster</name>
        <dbReference type="ChEBI" id="CHEBI:49883"/>
        <label>2</label>
    </ligand>
</feature>
<feature type="binding site" evidence="1">
    <location>
        <position position="106"/>
    </location>
    <ligand>
        <name>[4Fe-4S] cluster</name>
        <dbReference type="ChEBI" id="CHEBI:49883"/>
        <label>2</label>
    </ligand>
</feature>
<feature type="binding site" evidence="1">
    <location>
        <position position="110"/>
    </location>
    <ligand>
        <name>[4Fe-4S] cluster</name>
        <dbReference type="ChEBI" id="CHEBI:49883"/>
        <label>1</label>
    </ligand>
</feature>
<dbReference type="EC" id="7.1.1.-" evidence="1"/>
<dbReference type="EMBL" id="CP000237">
    <property type="protein sequence ID" value="ABD45651.1"/>
    <property type="molecule type" value="Genomic_DNA"/>
</dbReference>
<dbReference type="RefSeq" id="WP_011452198.1">
    <property type="nucleotide sequence ID" value="NC_007798.1"/>
</dbReference>
<dbReference type="SMR" id="Q2GCV4"/>
<dbReference type="STRING" id="222891.NSE_0820"/>
<dbReference type="KEGG" id="nse:NSE_0820"/>
<dbReference type="eggNOG" id="COG1143">
    <property type="taxonomic scope" value="Bacteria"/>
</dbReference>
<dbReference type="HOGENOM" id="CLU_067218_5_1_5"/>
<dbReference type="OrthoDB" id="9808559at2"/>
<dbReference type="Proteomes" id="UP000001942">
    <property type="component" value="Chromosome"/>
</dbReference>
<dbReference type="GO" id="GO:0005886">
    <property type="term" value="C:plasma membrane"/>
    <property type="evidence" value="ECO:0007669"/>
    <property type="project" value="UniProtKB-SubCell"/>
</dbReference>
<dbReference type="GO" id="GO:0051539">
    <property type="term" value="F:4 iron, 4 sulfur cluster binding"/>
    <property type="evidence" value="ECO:0007669"/>
    <property type="project" value="UniProtKB-KW"/>
</dbReference>
<dbReference type="GO" id="GO:0005506">
    <property type="term" value="F:iron ion binding"/>
    <property type="evidence" value="ECO:0007669"/>
    <property type="project" value="UniProtKB-UniRule"/>
</dbReference>
<dbReference type="GO" id="GO:0050136">
    <property type="term" value="F:NADH:ubiquinone reductase (non-electrogenic) activity"/>
    <property type="evidence" value="ECO:0007669"/>
    <property type="project" value="UniProtKB-UniRule"/>
</dbReference>
<dbReference type="GO" id="GO:0048038">
    <property type="term" value="F:quinone binding"/>
    <property type="evidence" value="ECO:0007669"/>
    <property type="project" value="UniProtKB-KW"/>
</dbReference>
<dbReference type="GO" id="GO:0009060">
    <property type="term" value="P:aerobic respiration"/>
    <property type="evidence" value="ECO:0007669"/>
    <property type="project" value="TreeGrafter"/>
</dbReference>
<dbReference type="FunFam" id="3.30.70.3270:FF:000001">
    <property type="entry name" value="NADH-quinone oxidoreductase subunit I 1"/>
    <property type="match status" value="1"/>
</dbReference>
<dbReference type="Gene3D" id="3.30.70.3270">
    <property type="match status" value="1"/>
</dbReference>
<dbReference type="HAMAP" id="MF_01351">
    <property type="entry name" value="NDH1_NuoI"/>
    <property type="match status" value="1"/>
</dbReference>
<dbReference type="InterPro" id="IPR017896">
    <property type="entry name" value="4Fe4S_Fe-S-bd"/>
</dbReference>
<dbReference type="InterPro" id="IPR017900">
    <property type="entry name" value="4Fe4S_Fe_S_CS"/>
</dbReference>
<dbReference type="InterPro" id="IPR010226">
    <property type="entry name" value="NADH_quinone_OxRdtase_chainI"/>
</dbReference>
<dbReference type="NCBIfam" id="TIGR01971">
    <property type="entry name" value="NuoI"/>
    <property type="match status" value="1"/>
</dbReference>
<dbReference type="NCBIfam" id="NF004538">
    <property type="entry name" value="PRK05888.1-4"/>
    <property type="match status" value="1"/>
</dbReference>
<dbReference type="NCBIfam" id="NF004539">
    <property type="entry name" value="PRK05888.1-5"/>
    <property type="match status" value="1"/>
</dbReference>
<dbReference type="PANTHER" id="PTHR10849:SF20">
    <property type="entry name" value="NADH DEHYDROGENASE [UBIQUINONE] IRON-SULFUR PROTEIN 8, MITOCHONDRIAL"/>
    <property type="match status" value="1"/>
</dbReference>
<dbReference type="PANTHER" id="PTHR10849">
    <property type="entry name" value="NADH DEHYDROGENASE UBIQUINONE IRON-SULFUR PROTEIN 8, MITOCHONDRIAL"/>
    <property type="match status" value="1"/>
</dbReference>
<dbReference type="Pfam" id="PF12838">
    <property type="entry name" value="Fer4_7"/>
    <property type="match status" value="1"/>
</dbReference>
<dbReference type="SUPFAM" id="SSF54862">
    <property type="entry name" value="4Fe-4S ferredoxins"/>
    <property type="match status" value="1"/>
</dbReference>
<dbReference type="PROSITE" id="PS00198">
    <property type="entry name" value="4FE4S_FER_1"/>
    <property type="match status" value="2"/>
</dbReference>
<dbReference type="PROSITE" id="PS51379">
    <property type="entry name" value="4FE4S_FER_2"/>
    <property type="match status" value="2"/>
</dbReference>
<protein>
    <recommendedName>
        <fullName evidence="1">NADH-quinone oxidoreductase subunit I</fullName>
        <ecNumber evidence="1">7.1.1.-</ecNumber>
    </recommendedName>
    <alternativeName>
        <fullName evidence="1">NADH dehydrogenase I subunit I</fullName>
    </alternativeName>
    <alternativeName>
        <fullName evidence="1">NDH-1 subunit I</fullName>
    </alternativeName>
</protein>
<name>NUOI_NEOSM</name>
<reference key="1">
    <citation type="journal article" date="2006" name="PLoS Genet.">
        <title>Comparative genomics of emerging human ehrlichiosis agents.</title>
        <authorList>
            <person name="Dunning Hotopp J.C."/>
            <person name="Lin M."/>
            <person name="Madupu R."/>
            <person name="Crabtree J."/>
            <person name="Angiuoli S.V."/>
            <person name="Eisen J.A."/>
            <person name="Seshadri R."/>
            <person name="Ren Q."/>
            <person name="Wu M."/>
            <person name="Utterback T.R."/>
            <person name="Smith S."/>
            <person name="Lewis M."/>
            <person name="Khouri H."/>
            <person name="Zhang C."/>
            <person name="Niu H."/>
            <person name="Lin Q."/>
            <person name="Ohashi N."/>
            <person name="Zhi N."/>
            <person name="Nelson W.C."/>
            <person name="Brinkac L.M."/>
            <person name="Dodson R.J."/>
            <person name="Rosovitz M.J."/>
            <person name="Sundaram J.P."/>
            <person name="Daugherty S.C."/>
            <person name="Davidsen T."/>
            <person name="Durkin A.S."/>
            <person name="Gwinn M.L."/>
            <person name="Haft D.H."/>
            <person name="Selengut J.D."/>
            <person name="Sullivan S.A."/>
            <person name="Zafar N."/>
            <person name="Zhou L."/>
            <person name="Benahmed F."/>
            <person name="Forberger H."/>
            <person name="Halpin R."/>
            <person name="Mulligan S."/>
            <person name="Robinson J."/>
            <person name="White O."/>
            <person name="Rikihisa Y."/>
            <person name="Tettelin H."/>
        </authorList>
    </citation>
    <scope>NUCLEOTIDE SEQUENCE [LARGE SCALE GENOMIC DNA]</scope>
    <source>
        <strain>ATCC VR-367 / Miyayama</strain>
    </source>
</reference>
<sequence length="160" mass="18625">MFKFLSQMQLTRFFVGFRTVLWYFFAPKVTIKYPQEKGPISLRFRGEHALRRYKNGEERCIACKLCEVVCPAQAITIEAAPRESDGSRRATKYDIDMTKCIYCGFCQEACPVDAIVEGPNFEFARENREDLLYDKKKLLDNGSKWESALIKMLNRNDTTH</sequence>
<proteinExistence type="inferred from homology"/>
<evidence type="ECO:0000255" key="1">
    <source>
        <dbReference type="HAMAP-Rule" id="MF_01351"/>
    </source>
</evidence>